<protein>
    <recommendedName>
        <fullName evidence="1">DNA ligase</fullName>
        <ecNumber evidence="1">6.5.1.2</ecNumber>
    </recommendedName>
    <alternativeName>
        <fullName evidence="1">Polydeoxyribonucleotide synthase [NAD(+)]</fullName>
    </alternativeName>
</protein>
<gene>
    <name evidence="1" type="primary">ligA</name>
    <name type="ordered locus">UTI89_C2743</name>
</gene>
<keyword id="KW-0227">DNA damage</keyword>
<keyword id="KW-0234">DNA repair</keyword>
<keyword id="KW-0235">DNA replication</keyword>
<keyword id="KW-0436">Ligase</keyword>
<keyword id="KW-0460">Magnesium</keyword>
<keyword id="KW-0464">Manganese</keyword>
<keyword id="KW-0479">Metal-binding</keyword>
<keyword id="KW-0520">NAD</keyword>
<keyword id="KW-0862">Zinc</keyword>
<sequence length="671" mass="73614">MESIEQQLTELRTTLRHHEYLYHVMDAPEIPDAEYDRLMRELRELETKHPELITPDSPTQRVGAAPLAAFSQIRHEVPMLSLDNVFDEESFLAFNKRVQDRLKSNEKVTWCCELKLDGLAVSILYENGVLVSAATRGDGTTGEDITSNVRTIRAIPLKLHGENIPARLEVRGEVFLPQAGFEKINEDARRTGGKVFANPRNAAAGSLRQLDPRITAKRPLTFFCYGVGVLEGGELPDTHLGRLMQFKAWGLPVSDRVTLCESAEEVLAFYHKVEEDRPTLGFDIDGVVIKVNSLAQQEQLGFVARAPRWAVAFKFPAQEQMTFVRDVEFQVGRTGAITPVARLEPVHVAGVLVSNATLHNADEIERLGLRIGDKVVIRRAGDVIPQVVNVVLSERPEDTREVVFPTHCPVCGSDVERVEGEAVARCTGGLICGAQRKESLKHFVSRRAMDVDGMGDKIIDQLVEKEYVHTPADLFKLTAGKLTGLERMGPKSAQNVVNALEKAKETTFARFLYALGVREVGEATAAGLAAYFGTLEALEAASIEELQKVPDVGIVVASHVHNFFAEESNRNVISELLAEGVHWPEPIVINAEEIDSPFAGKTVVLTGSLSQMSRDDAKARLVELGAKVAGSVSKKTDLVIAGEAAGSKLAKAQELGIEVIDETEMLRLLGS</sequence>
<comment type="function">
    <text evidence="1">DNA ligase that catalyzes the formation of phosphodiester linkages between 5'-phosphoryl and 3'-hydroxyl groups in double-stranded DNA using NAD as a coenzyme and as the energy source for the reaction. It is essential for DNA replication and repair of damaged DNA.</text>
</comment>
<comment type="catalytic activity">
    <reaction evidence="1">
        <text>NAD(+) + (deoxyribonucleotide)n-3'-hydroxyl + 5'-phospho-(deoxyribonucleotide)m = (deoxyribonucleotide)n+m + AMP + beta-nicotinamide D-nucleotide.</text>
        <dbReference type="EC" id="6.5.1.2"/>
    </reaction>
</comment>
<comment type="cofactor">
    <cofactor evidence="1">
        <name>Mg(2+)</name>
        <dbReference type="ChEBI" id="CHEBI:18420"/>
    </cofactor>
    <cofactor evidence="1">
        <name>Mn(2+)</name>
        <dbReference type="ChEBI" id="CHEBI:29035"/>
    </cofactor>
</comment>
<comment type="similarity">
    <text evidence="1">Belongs to the NAD-dependent DNA ligase family. LigA subfamily.</text>
</comment>
<organism>
    <name type="scientific">Escherichia coli (strain UTI89 / UPEC)</name>
    <dbReference type="NCBI Taxonomy" id="364106"/>
    <lineage>
        <taxon>Bacteria</taxon>
        <taxon>Pseudomonadati</taxon>
        <taxon>Pseudomonadota</taxon>
        <taxon>Gammaproteobacteria</taxon>
        <taxon>Enterobacterales</taxon>
        <taxon>Enterobacteriaceae</taxon>
        <taxon>Escherichia</taxon>
    </lineage>
</organism>
<proteinExistence type="inferred from homology"/>
<dbReference type="EC" id="6.5.1.2" evidence="1"/>
<dbReference type="EMBL" id="CP000243">
    <property type="protein sequence ID" value="ABE08203.1"/>
    <property type="molecule type" value="Genomic_DNA"/>
</dbReference>
<dbReference type="RefSeq" id="WP_000443708.1">
    <property type="nucleotide sequence ID" value="NZ_CP064825.1"/>
</dbReference>
<dbReference type="SMR" id="Q1R8W1"/>
<dbReference type="KEGG" id="eci:UTI89_C2743"/>
<dbReference type="HOGENOM" id="CLU_007764_2_1_6"/>
<dbReference type="Proteomes" id="UP000001952">
    <property type="component" value="Chromosome"/>
</dbReference>
<dbReference type="GO" id="GO:0005829">
    <property type="term" value="C:cytosol"/>
    <property type="evidence" value="ECO:0007669"/>
    <property type="project" value="TreeGrafter"/>
</dbReference>
<dbReference type="GO" id="GO:0003677">
    <property type="term" value="F:DNA binding"/>
    <property type="evidence" value="ECO:0007669"/>
    <property type="project" value="InterPro"/>
</dbReference>
<dbReference type="GO" id="GO:0003911">
    <property type="term" value="F:DNA ligase (NAD+) activity"/>
    <property type="evidence" value="ECO:0007669"/>
    <property type="project" value="UniProtKB-UniRule"/>
</dbReference>
<dbReference type="GO" id="GO:0046872">
    <property type="term" value="F:metal ion binding"/>
    <property type="evidence" value="ECO:0007669"/>
    <property type="project" value="UniProtKB-KW"/>
</dbReference>
<dbReference type="GO" id="GO:0006281">
    <property type="term" value="P:DNA repair"/>
    <property type="evidence" value="ECO:0007669"/>
    <property type="project" value="UniProtKB-KW"/>
</dbReference>
<dbReference type="GO" id="GO:0006260">
    <property type="term" value="P:DNA replication"/>
    <property type="evidence" value="ECO:0007669"/>
    <property type="project" value="UniProtKB-KW"/>
</dbReference>
<dbReference type="CDD" id="cd17748">
    <property type="entry name" value="BRCT_DNA_ligase_like"/>
    <property type="match status" value="1"/>
</dbReference>
<dbReference type="CDD" id="cd00114">
    <property type="entry name" value="LIGANc"/>
    <property type="match status" value="1"/>
</dbReference>
<dbReference type="FunFam" id="1.10.150.20:FF:000006">
    <property type="entry name" value="DNA ligase"/>
    <property type="match status" value="1"/>
</dbReference>
<dbReference type="FunFam" id="1.10.150.20:FF:000007">
    <property type="entry name" value="DNA ligase"/>
    <property type="match status" value="1"/>
</dbReference>
<dbReference type="FunFam" id="1.10.287.610:FF:000002">
    <property type="entry name" value="DNA ligase"/>
    <property type="match status" value="1"/>
</dbReference>
<dbReference type="FunFam" id="2.40.50.140:FF:000012">
    <property type="entry name" value="DNA ligase"/>
    <property type="match status" value="1"/>
</dbReference>
<dbReference type="FunFam" id="3.30.470.30:FF:000001">
    <property type="entry name" value="DNA ligase"/>
    <property type="match status" value="1"/>
</dbReference>
<dbReference type="FunFam" id="3.40.50.10190:FF:000004">
    <property type="entry name" value="DNA ligase"/>
    <property type="match status" value="1"/>
</dbReference>
<dbReference type="FunFam" id="6.20.10.30:FF:000001">
    <property type="entry name" value="DNA ligase"/>
    <property type="match status" value="1"/>
</dbReference>
<dbReference type="Gene3D" id="6.20.10.30">
    <property type="match status" value="1"/>
</dbReference>
<dbReference type="Gene3D" id="1.10.150.20">
    <property type="entry name" value="5' to 3' exonuclease, C-terminal subdomain"/>
    <property type="match status" value="2"/>
</dbReference>
<dbReference type="Gene3D" id="3.40.50.10190">
    <property type="entry name" value="BRCT domain"/>
    <property type="match status" value="1"/>
</dbReference>
<dbReference type="Gene3D" id="3.30.470.30">
    <property type="entry name" value="DNA ligase/mRNA capping enzyme"/>
    <property type="match status" value="1"/>
</dbReference>
<dbReference type="Gene3D" id="1.10.287.610">
    <property type="entry name" value="Helix hairpin bin"/>
    <property type="match status" value="1"/>
</dbReference>
<dbReference type="Gene3D" id="2.40.50.140">
    <property type="entry name" value="Nucleic acid-binding proteins"/>
    <property type="match status" value="1"/>
</dbReference>
<dbReference type="HAMAP" id="MF_01588">
    <property type="entry name" value="DNA_ligase_A"/>
    <property type="match status" value="1"/>
</dbReference>
<dbReference type="InterPro" id="IPR001357">
    <property type="entry name" value="BRCT_dom"/>
</dbReference>
<dbReference type="InterPro" id="IPR036420">
    <property type="entry name" value="BRCT_dom_sf"/>
</dbReference>
<dbReference type="InterPro" id="IPR041663">
    <property type="entry name" value="DisA/LigA_HHH"/>
</dbReference>
<dbReference type="InterPro" id="IPR001679">
    <property type="entry name" value="DNA_ligase"/>
</dbReference>
<dbReference type="InterPro" id="IPR018239">
    <property type="entry name" value="DNA_ligase_AS"/>
</dbReference>
<dbReference type="InterPro" id="IPR033136">
    <property type="entry name" value="DNA_ligase_CS"/>
</dbReference>
<dbReference type="InterPro" id="IPR013839">
    <property type="entry name" value="DNAligase_adenylation"/>
</dbReference>
<dbReference type="InterPro" id="IPR013840">
    <property type="entry name" value="DNAligase_N"/>
</dbReference>
<dbReference type="InterPro" id="IPR003583">
    <property type="entry name" value="Hlx-hairpin-Hlx_DNA-bd_motif"/>
</dbReference>
<dbReference type="InterPro" id="IPR012340">
    <property type="entry name" value="NA-bd_OB-fold"/>
</dbReference>
<dbReference type="InterPro" id="IPR004150">
    <property type="entry name" value="NAD_DNA_ligase_OB"/>
</dbReference>
<dbReference type="InterPro" id="IPR010994">
    <property type="entry name" value="RuvA_2-like"/>
</dbReference>
<dbReference type="InterPro" id="IPR004149">
    <property type="entry name" value="Znf_DNAligase_C4"/>
</dbReference>
<dbReference type="NCBIfam" id="TIGR00575">
    <property type="entry name" value="dnlj"/>
    <property type="match status" value="1"/>
</dbReference>
<dbReference type="NCBIfam" id="NF005932">
    <property type="entry name" value="PRK07956.1"/>
    <property type="match status" value="1"/>
</dbReference>
<dbReference type="PANTHER" id="PTHR23389">
    <property type="entry name" value="CHROMOSOME TRANSMISSION FIDELITY FACTOR 18"/>
    <property type="match status" value="1"/>
</dbReference>
<dbReference type="PANTHER" id="PTHR23389:SF9">
    <property type="entry name" value="DNA LIGASE"/>
    <property type="match status" value="1"/>
</dbReference>
<dbReference type="Pfam" id="PF00533">
    <property type="entry name" value="BRCT"/>
    <property type="match status" value="1"/>
</dbReference>
<dbReference type="Pfam" id="PF01653">
    <property type="entry name" value="DNA_ligase_aden"/>
    <property type="match status" value="1"/>
</dbReference>
<dbReference type="Pfam" id="PF03120">
    <property type="entry name" value="DNA_ligase_OB"/>
    <property type="match status" value="1"/>
</dbReference>
<dbReference type="Pfam" id="PF03119">
    <property type="entry name" value="DNA_ligase_ZBD"/>
    <property type="match status" value="1"/>
</dbReference>
<dbReference type="Pfam" id="PF12826">
    <property type="entry name" value="HHH_2"/>
    <property type="match status" value="1"/>
</dbReference>
<dbReference type="Pfam" id="PF14520">
    <property type="entry name" value="HHH_5"/>
    <property type="match status" value="1"/>
</dbReference>
<dbReference type="Pfam" id="PF22745">
    <property type="entry name" value="Nlig-Ia"/>
    <property type="match status" value="1"/>
</dbReference>
<dbReference type="PIRSF" id="PIRSF001604">
    <property type="entry name" value="LigA"/>
    <property type="match status" value="1"/>
</dbReference>
<dbReference type="SMART" id="SM00292">
    <property type="entry name" value="BRCT"/>
    <property type="match status" value="1"/>
</dbReference>
<dbReference type="SMART" id="SM00278">
    <property type="entry name" value="HhH1"/>
    <property type="match status" value="4"/>
</dbReference>
<dbReference type="SMART" id="SM00532">
    <property type="entry name" value="LIGANc"/>
    <property type="match status" value="1"/>
</dbReference>
<dbReference type="SUPFAM" id="SSF52113">
    <property type="entry name" value="BRCT domain"/>
    <property type="match status" value="1"/>
</dbReference>
<dbReference type="SUPFAM" id="SSF56091">
    <property type="entry name" value="DNA ligase/mRNA capping enzyme, catalytic domain"/>
    <property type="match status" value="1"/>
</dbReference>
<dbReference type="SUPFAM" id="SSF50249">
    <property type="entry name" value="Nucleic acid-binding proteins"/>
    <property type="match status" value="1"/>
</dbReference>
<dbReference type="SUPFAM" id="SSF47781">
    <property type="entry name" value="RuvA domain 2-like"/>
    <property type="match status" value="1"/>
</dbReference>
<dbReference type="PROSITE" id="PS50172">
    <property type="entry name" value="BRCT"/>
    <property type="match status" value="1"/>
</dbReference>
<dbReference type="PROSITE" id="PS01055">
    <property type="entry name" value="DNA_LIGASE_N1"/>
    <property type="match status" value="1"/>
</dbReference>
<dbReference type="PROSITE" id="PS01056">
    <property type="entry name" value="DNA_LIGASE_N2"/>
    <property type="match status" value="1"/>
</dbReference>
<reference key="1">
    <citation type="journal article" date="2006" name="Proc. Natl. Acad. Sci. U.S.A.">
        <title>Identification of genes subject to positive selection in uropathogenic strains of Escherichia coli: a comparative genomics approach.</title>
        <authorList>
            <person name="Chen S.L."/>
            <person name="Hung C.-S."/>
            <person name="Xu J."/>
            <person name="Reigstad C.S."/>
            <person name="Magrini V."/>
            <person name="Sabo A."/>
            <person name="Blasiar D."/>
            <person name="Bieri T."/>
            <person name="Meyer R.R."/>
            <person name="Ozersky P."/>
            <person name="Armstrong J.R."/>
            <person name="Fulton R.S."/>
            <person name="Latreille J.P."/>
            <person name="Spieth J."/>
            <person name="Hooton T.M."/>
            <person name="Mardis E.R."/>
            <person name="Hultgren S.J."/>
            <person name="Gordon J.I."/>
        </authorList>
    </citation>
    <scope>NUCLEOTIDE SEQUENCE [LARGE SCALE GENOMIC DNA]</scope>
    <source>
        <strain>UTI89 / UPEC</strain>
    </source>
</reference>
<name>DNLJ_ECOUT</name>
<feature type="chain" id="PRO_0000313231" description="DNA ligase">
    <location>
        <begin position="1"/>
        <end position="671"/>
    </location>
</feature>
<feature type="domain" description="BRCT" evidence="1">
    <location>
        <begin position="593"/>
        <end position="671"/>
    </location>
</feature>
<feature type="active site" description="N6-AMP-lysine intermediate" evidence="1">
    <location>
        <position position="115"/>
    </location>
</feature>
<feature type="binding site" evidence="1">
    <location>
        <begin position="32"/>
        <end position="36"/>
    </location>
    <ligand>
        <name>NAD(+)</name>
        <dbReference type="ChEBI" id="CHEBI:57540"/>
    </ligand>
</feature>
<feature type="binding site" evidence="1">
    <location>
        <begin position="81"/>
        <end position="82"/>
    </location>
    <ligand>
        <name>NAD(+)</name>
        <dbReference type="ChEBI" id="CHEBI:57540"/>
    </ligand>
</feature>
<feature type="binding site" evidence="1">
    <location>
        <position position="113"/>
    </location>
    <ligand>
        <name>NAD(+)</name>
        <dbReference type="ChEBI" id="CHEBI:57540"/>
    </ligand>
</feature>
<feature type="binding site" evidence="1">
    <location>
        <position position="136"/>
    </location>
    <ligand>
        <name>NAD(+)</name>
        <dbReference type="ChEBI" id="CHEBI:57540"/>
    </ligand>
</feature>
<feature type="binding site" evidence="1">
    <location>
        <position position="173"/>
    </location>
    <ligand>
        <name>NAD(+)</name>
        <dbReference type="ChEBI" id="CHEBI:57540"/>
    </ligand>
</feature>
<feature type="binding site" evidence="1">
    <location>
        <position position="290"/>
    </location>
    <ligand>
        <name>NAD(+)</name>
        <dbReference type="ChEBI" id="CHEBI:57540"/>
    </ligand>
</feature>
<feature type="binding site" evidence="1">
    <location>
        <position position="314"/>
    </location>
    <ligand>
        <name>NAD(+)</name>
        <dbReference type="ChEBI" id="CHEBI:57540"/>
    </ligand>
</feature>
<feature type="binding site" evidence="1">
    <location>
        <position position="408"/>
    </location>
    <ligand>
        <name>Zn(2+)</name>
        <dbReference type="ChEBI" id="CHEBI:29105"/>
    </ligand>
</feature>
<feature type="binding site" evidence="1">
    <location>
        <position position="411"/>
    </location>
    <ligand>
        <name>Zn(2+)</name>
        <dbReference type="ChEBI" id="CHEBI:29105"/>
    </ligand>
</feature>
<feature type="binding site" evidence="1">
    <location>
        <position position="426"/>
    </location>
    <ligand>
        <name>Zn(2+)</name>
        <dbReference type="ChEBI" id="CHEBI:29105"/>
    </ligand>
</feature>
<feature type="binding site" evidence="1">
    <location>
        <position position="432"/>
    </location>
    <ligand>
        <name>Zn(2+)</name>
        <dbReference type="ChEBI" id="CHEBI:29105"/>
    </ligand>
</feature>
<evidence type="ECO:0000255" key="1">
    <source>
        <dbReference type="HAMAP-Rule" id="MF_01588"/>
    </source>
</evidence>
<accession>Q1R8W1</accession>